<evidence type="ECO:0000255" key="1">
    <source>
        <dbReference type="HAMAP-Rule" id="MF_01270"/>
    </source>
</evidence>
<accession>B7LQN0</accession>
<sequence>MRSGRYIGVMSGTSLDGVDVVLAAIDENMVAQQASLSWPIPVELKQAVLDICQGQQLTLSQFGQLDTRLGILFADAVNGLLAQENLQPQDIVAIGCHGQTVWHEPQGPAPHTLQIGDNNQIVARTGITVVGDFRRRDIALGGQGAPLVPAFHHALLAHPTERRMVLNIGGIANLSMLLPGQPVRGYDTGPGNMLMDAWIWRQCAKPYDKDAQWACEGNVVLPLLQQMLNDPYFAAPAPKSTGREYFNYGWLERHLQKFPGLRSRDVQATLAELTAVTISEQVLLSGGCDRLMVCGGGSRNPLVMARLAGLLPGTEVTTTDTAGISGDDMEALAFAWLAWRTLAGLAGNLPSVTGASEATVLGAIFPANPPRTQS</sequence>
<keyword id="KW-0067">ATP-binding</keyword>
<keyword id="KW-0119">Carbohydrate metabolism</keyword>
<keyword id="KW-0418">Kinase</keyword>
<keyword id="KW-0547">Nucleotide-binding</keyword>
<keyword id="KW-0808">Transferase</keyword>
<dbReference type="EC" id="2.7.1.170" evidence="1"/>
<dbReference type="EMBL" id="CU928158">
    <property type="protein sequence ID" value="CAQ88923.1"/>
    <property type="molecule type" value="Genomic_DNA"/>
</dbReference>
<dbReference type="RefSeq" id="WP_001256262.1">
    <property type="nucleotide sequence ID" value="NC_011740.1"/>
</dbReference>
<dbReference type="SMR" id="B7LQN0"/>
<dbReference type="GeneID" id="75057551"/>
<dbReference type="KEGG" id="efe:EFER_1403"/>
<dbReference type="HOGENOM" id="CLU_038782_0_0_6"/>
<dbReference type="OrthoDB" id="9763949at2"/>
<dbReference type="UniPathway" id="UPA00343"/>
<dbReference type="UniPathway" id="UPA00544"/>
<dbReference type="Proteomes" id="UP000000745">
    <property type="component" value="Chromosome"/>
</dbReference>
<dbReference type="GO" id="GO:0005524">
    <property type="term" value="F:ATP binding"/>
    <property type="evidence" value="ECO:0007669"/>
    <property type="project" value="UniProtKB-UniRule"/>
</dbReference>
<dbReference type="GO" id="GO:0016301">
    <property type="term" value="F:kinase activity"/>
    <property type="evidence" value="ECO:0007669"/>
    <property type="project" value="UniProtKB-KW"/>
</dbReference>
<dbReference type="GO" id="GO:0016773">
    <property type="term" value="F:phosphotransferase activity, alcohol group as acceptor"/>
    <property type="evidence" value="ECO:0007669"/>
    <property type="project" value="UniProtKB-UniRule"/>
</dbReference>
<dbReference type="GO" id="GO:0097175">
    <property type="term" value="P:1,6-anhydro-N-acetyl-beta-muramic acid catabolic process"/>
    <property type="evidence" value="ECO:0007669"/>
    <property type="project" value="UniProtKB-UniRule"/>
</dbReference>
<dbReference type="GO" id="GO:0006040">
    <property type="term" value="P:amino sugar metabolic process"/>
    <property type="evidence" value="ECO:0007669"/>
    <property type="project" value="InterPro"/>
</dbReference>
<dbReference type="GO" id="GO:0009254">
    <property type="term" value="P:peptidoglycan turnover"/>
    <property type="evidence" value="ECO:0007669"/>
    <property type="project" value="UniProtKB-UniRule"/>
</dbReference>
<dbReference type="CDD" id="cd24050">
    <property type="entry name" value="ASKHA_NBD_ANMK"/>
    <property type="match status" value="1"/>
</dbReference>
<dbReference type="Gene3D" id="3.30.420.40">
    <property type="match status" value="2"/>
</dbReference>
<dbReference type="HAMAP" id="MF_01270">
    <property type="entry name" value="AnhMurNAc_kinase"/>
    <property type="match status" value="1"/>
</dbReference>
<dbReference type="InterPro" id="IPR005338">
    <property type="entry name" value="Anhydro_N_Ac-Mur_kinase"/>
</dbReference>
<dbReference type="InterPro" id="IPR043129">
    <property type="entry name" value="ATPase_NBD"/>
</dbReference>
<dbReference type="NCBIfam" id="NF007138">
    <property type="entry name" value="PRK09585.1-1"/>
    <property type="match status" value="1"/>
</dbReference>
<dbReference type="NCBIfam" id="NF007139">
    <property type="entry name" value="PRK09585.1-3"/>
    <property type="match status" value="1"/>
</dbReference>
<dbReference type="NCBIfam" id="NF007148">
    <property type="entry name" value="PRK09585.3-2"/>
    <property type="match status" value="1"/>
</dbReference>
<dbReference type="PANTHER" id="PTHR30605">
    <property type="entry name" value="ANHYDRO-N-ACETYLMURAMIC ACID KINASE"/>
    <property type="match status" value="1"/>
</dbReference>
<dbReference type="PANTHER" id="PTHR30605:SF0">
    <property type="entry name" value="ANHYDRO-N-ACETYLMURAMIC ACID KINASE"/>
    <property type="match status" value="1"/>
</dbReference>
<dbReference type="Pfam" id="PF03702">
    <property type="entry name" value="AnmK"/>
    <property type="match status" value="1"/>
</dbReference>
<dbReference type="SUPFAM" id="SSF53067">
    <property type="entry name" value="Actin-like ATPase domain"/>
    <property type="match status" value="1"/>
</dbReference>
<protein>
    <recommendedName>
        <fullName evidence="1">Anhydro-N-acetylmuramic acid kinase</fullName>
        <ecNumber evidence="1">2.7.1.170</ecNumber>
    </recommendedName>
    <alternativeName>
        <fullName evidence="1">AnhMurNAc kinase</fullName>
    </alternativeName>
</protein>
<comment type="function">
    <text evidence="1">Catalyzes the specific phosphorylation of 1,6-anhydro-N-acetylmuramic acid (anhMurNAc) with the simultaneous cleavage of the 1,6-anhydro ring, generating MurNAc-6-P. Is required for the utilization of anhMurNAc either imported from the medium or derived from its own cell wall murein, and thus plays a role in cell wall recycling.</text>
</comment>
<comment type="catalytic activity">
    <reaction evidence="1">
        <text>1,6-anhydro-N-acetyl-beta-muramate + ATP + H2O = N-acetyl-D-muramate 6-phosphate + ADP + H(+)</text>
        <dbReference type="Rhea" id="RHEA:24952"/>
        <dbReference type="ChEBI" id="CHEBI:15377"/>
        <dbReference type="ChEBI" id="CHEBI:15378"/>
        <dbReference type="ChEBI" id="CHEBI:30616"/>
        <dbReference type="ChEBI" id="CHEBI:58690"/>
        <dbReference type="ChEBI" id="CHEBI:58722"/>
        <dbReference type="ChEBI" id="CHEBI:456216"/>
        <dbReference type="EC" id="2.7.1.170"/>
    </reaction>
</comment>
<comment type="pathway">
    <text evidence="1">Amino-sugar metabolism; 1,6-anhydro-N-acetylmuramate degradation.</text>
</comment>
<comment type="pathway">
    <text evidence="1">Cell wall biogenesis; peptidoglycan recycling.</text>
</comment>
<comment type="similarity">
    <text evidence="1">Belongs to the anhydro-N-acetylmuramic acid kinase family.</text>
</comment>
<name>ANMK_ESCF3</name>
<organism>
    <name type="scientific">Escherichia fergusonii (strain ATCC 35469 / DSM 13698 / CCUG 18766 / IAM 14443 / JCM 21226 / LMG 7866 / NBRC 102419 / NCTC 12128 / CDC 0568-73)</name>
    <dbReference type="NCBI Taxonomy" id="585054"/>
    <lineage>
        <taxon>Bacteria</taxon>
        <taxon>Pseudomonadati</taxon>
        <taxon>Pseudomonadota</taxon>
        <taxon>Gammaproteobacteria</taxon>
        <taxon>Enterobacterales</taxon>
        <taxon>Enterobacteriaceae</taxon>
        <taxon>Escherichia</taxon>
    </lineage>
</organism>
<reference key="1">
    <citation type="journal article" date="2009" name="PLoS Genet.">
        <title>Organised genome dynamics in the Escherichia coli species results in highly diverse adaptive paths.</title>
        <authorList>
            <person name="Touchon M."/>
            <person name="Hoede C."/>
            <person name="Tenaillon O."/>
            <person name="Barbe V."/>
            <person name="Baeriswyl S."/>
            <person name="Bidet P."/>
            <person name="Bingen E."/>
            <person name="Bonacorsi S."/>
            <person name="Bouchier C."/>
            <person name="Bouvet O."/>
            <person name="Calteau A."/>
            <person name="Chiapello H."/>
            <person name="Clermont O."/>
            <person name="Cruveiller S."/>
            <person name="Danchin A."/>
            <person name="Diard M."/>
            <person name="Dossat C."/>
            <person name="Karoui M.E."/>
            <person name="Frapy E."/>
            <person name="Garry L."/>
            <person name="Ghigo J.M."/>
            <person name="Gilles A.M."/>
            <person name="Johnson J."/>
            <person name="Le Bouguenec C."/>
            <person name="Lescat M."/>
            <person name="Mangenot S."/>
            <person name="Martinez-Jehanne V."/>
            <person name="Matic I."/>
            <person name="Nassif X."/>
            <person name="Oztas S."/>
            <person name="Petit M.A."/>
            <person name="Pichon C."/>
            <person name="Rouy Z."/>
            <person name="Ruf C.S."/>
            <person name="Schneider D."/>
            <person name="Tourret J."/>
            <person name="Vacherie B."/>
            <person name="Vallenet D."/>
            <person name="Medigue C."/>
            <person name="Rocha E.P.C."/>
            <person name="Denamur E."/>
        </authorList>
    </citation>
    <scope>NUCLEOTIDE SEQUENCE [LARGE SCALE GENOMIC DNA]</scope>
    <source>
        <strain>ATCC 35469 / DSM 13698 / BCRC 15582 / CCUG 18766 / IAM 14443 / JCM 21226 / LMG 7866 / NBRC 102419 / NCTC 12128 / CDC 0568-73</strain>
    </source>
</reference>
<feature type="chain" id="PRO_1000140162" description="Anhydro-N-acetylmuramic acid kinase">
    <location>
        <begin position="1"/>
        <end position="374"/>
    </location>
</feature>
<feature type="binding site" evidence="1">
    <location>
        <begin position="12"/>
        <end position="19"/>
    </location>
    <ligand>
        <name>ATP</name>
        <dbReference type="ChEBI" id="CHEBI:30616"/>
    </ligand>
</feature>
<proteinExistence type="inferred from homology"/>
<gene>
    <name evidence="1" type="primary">anmK</name>
    <name type="ordered locus">EFER_1403</name>
</gene>